<organism evidence="15">
    <name type="scientific">Caenorhabditis elegans</name>
    <dbReference type="NCBI Taxonomy" id="6239"/>
    <lineage>
        <taxon>Eukaryota</taxon>
        <taxon>Metazoa</taxon>
        <taxon>Ecdysozoa</taxon>
        <taxon>Nematoda</taxon>
        <taxon>Chromadorea</taxon>
        <taxon>Rhabditida</taxon>
        <taxon>Rhabditina</taxon>
        <taxon>Rhabditomorpha</taxon>
        <taxon>Rhabditoidea</taxon>
        <taxon>Rhabditidae</taxon>
        <taxon>Peloderinae</taxon>
        <taxon>Caenorhabditis</taxon>
    </lineage>
</organism>
<reference evidence="15" key="1">
    <citation type="journal article" date="1998" name="Science">
        <title>Genome sequence of the nematode C. elegans: a platform for investigating biology.</title>
        <authorList>
            <consortium name="The C. elegans sequencing consortium"/>
        </authorList>
    </citation>
    <scope>NUCLEOTIDE SEQUENCE [LARGE SCALE GENOMIC DNA]</scope>
    <source>
        <strain evidence="15">Bristol N2</strain>
    </source>
</reference>
<reference evidence="14" key="2">
    <citation type="journal article" date="1990" name="Genetics">
        <title>Genetic analysis of defecation in Caenorhabditis elegans.</title>
        <authorList>
            <person name="Thomas J.H."/>
        </authorList>
    </citation>
    <scope>FUNCTION</scope>
    <scope>MUTAGENESIS OF CYS-443</scope>
</reference>
<reference evidence="14" key="3">
    <citation type="journal article" date="2002" name="Neuron">
        <title>Regulation of retrograde signaling at neuromuscular junctions by the novel C2 domain protein AEX-1.</title>
        <authorList>
            <person name="Doi M."/>
            <person name="Iwasaki K."/>
        </authorList>
    </citation>
    <scope>FUNCTION</scope>
    <scope>MUTAGENESIS OF CYS-443</scope>
</reference>
<reference evidence="14" key="4">
    <citation type="journal article" date="2006" name="J. Neurochem.">
        <title>Defective processing of neuropeptide precursors in Caenorhabditis elegans lacking proprotein convertase 2 (KPC-2/EGL-3): mutant analysis by mass spectrometry.</title>
        <authorList>
            <person name="Husson S.J."/>
            <person name="Clynen E."/>
            <person name="Baggerman G."/>
            <person name="Janssen T."/>
            <person name="Schoofs L."/>
        </authorList>
    </citation>
    <scope>FUNCTION</scope>
    <scope>CATALYTIC ACTIVITY</scope>
    <scope>MUTAGENESIS OF CYS-443</scope>
</reference>
<reference evidence="14" key="5">
    <citation type="journal article" date="2008" name="Proc. Natl. Acad. Sci. U.S.A.">
        <title>Intestinal signaling to GABAergic neurons regulates a rhythmic behavior in Caenorhabditis elegans.</title>
        <authorList>
            <person name="Mahoney T.R."/>
            <person name="Luo S."/>
            <person name="Round E.K."/>
            <person name="Brauner M."/>
            <person name="Gottschalk A."/>
            <person name="Thomas J.H."/>
            <person name="Nonet M.L."/>
        </authorList>
    </citation>
    <scope>FUNCTION</scope>
    <scope>SUBCELLULAR LOCATION</scope>
    <scope>DISRUPTION PHENOTYPE</scope>
    <scope>MUTAGENESIS OF CYS-443</scope>
</reference>
<reference evidence="14" key="6">
    <citation type="journal article" date="2015" name="PLoS ONE">
        <title>Aberrant fat metabolism in Caenorhabditis elegans mutants with defects in the defecation motor program.</title>
        <authorList>
            <person name="Sheng M."/>
            <person name="Hosseinzadeh A."/>
            <person name="Muralidharan S.V."/>
            <person name="Gaur R."/>
            <person name="Selstam E."/>
            <person name="Tuck S."/>
        </authorList>
    </citation>
    <scope>FUNCTION</scope>
    <scope>DISRUPTION PHENOTYPE</scope>
    <scope>MUTAGENESIS OF GLY-184; GLY-405 AND CYS-443</scope>
</reference>
<protein>
    <recommendedName>
        <fullName evidence="14">Endoprotease aex-5</fullName>
        <ecNumber evidence="12">3.4.21.-</ecNumber>
    </recommendedName>
    <alternativeName>
        <fullName evidence="6">Subtilisin-like protease</fullName>
    </alternativeName>
</protein>
<dbReference type="EC" id="3.4.21.-" evidence="12"/>
<dbReference type="EMBL" id="BX284601">
    <property type="protein sequence ID" value="CAB05501.2"/>
    <property type="molecule type" value="Genomic_DNA"/>
</dbReference>
<dbReference type="PIR" id="T21624">
    <property type="entry name" value="T21624"/>
</dbReference>
<dbReference type="RefSeq" id="NP_493594.1">
    <property type="nucleotide sequence ID" value="NM_061193.6"/>
</dbReference>
<dbReference type="SMR" id="P91863"/>
<dbReference type="STRING" id="6239.F32A7.6.1"/>
<dbReference type="MEROPS" id="S08.132"/>
<dbReference type="GlyCosmos" id="P91863">
    <property type="glycosylation" value="2 sites, No reported glycans"/>
</dbReference>
<dbReference type="PaxDb" id="6239-F32A7.6"/>
<dbReference type="EnsemblMetazoa" id="F32A7.6.1">
    <property type="protein sequence ID" value="F32A7.6.1"/>
    <property type="gene ID" value="WBGene00000088"/>
</dbReference>
<dbReference type="GeneID" id="173358"/>
<dbReference type="KEGG" id="cel:CELE_F32A7.6"/>
<dbReference type="AGR" id="WB:WBGene00000088"/>
<dbReference type="CTD" id="173358"/>
<dbReference type="WormBase" id="F32A7.6">
    <property type="protein sequence ID" value="CE28554"/>
    <property type="gene ID" value="WBGene00000088"/>
    <property type="gene designation" value="aex-5"/>
</dbReference>
<dbReference type="eggNOG" id="KOG3525">
    <property type="taxonomic scope" value="Eukaryota"/>
</dbReference>
<dbReference type="HOGENOM" id="CLU_002976_4_4_1"/>
<dbReference type="InParanoid" id="P91863"/>
<dbReference type="OMA" id="MEGNQCG"/>
<dbReference type="OrthoDB" id="300641at2759"/>
<dbReference type="PhylomeDB" id="P91863"/>
<dbReference type="PRO" id="PR:P91863"/>
<dbReference type="Proteomes" id="UP000001940">
    <property type="component" value="Chromosome I"/>
</dbReference>
<dbReference type="Bgee" id="WBGene00000088">
    <property type="expression patterns" value="Expressed in larva and 3 other cell types or tissues"/>
</dbReference>
<dbReference type="GO" id="GO:0005615">
    <property type="term" value="C:extracellular space"/>
    <property type="evidence" value="ECO:0000314"/>
    <property type="project" value="UniProtKB"/>
</dbReference>
<dbReference type="GO" id="GO:0000139">
    <property type="term" value="C:Golgi membrane"/>
    <property type="evidence" value="ECO:0000318"/>
    <property type="project" value="GO_Central"/>
</dbReference>
<dbReference type="GO" id="GO:0005802">
    <property type="term" value="C:trans-Golgi network"/>
    <property type="evidence" value="ECO:0000318"/>
    <property type="project" value="GO_Central"/>
</dbReference>
<dbReference type="GO" id="GO:0004252">
    <property type="term" value="F:serine-type endopeptidase activity"/>
    <property type="evidence" value="ECO:0000315"/>
    <property type="project" value="UniProtKB"/>
</dbReference>
<dbReference type="GO" id="GO:0030421">
    <property type="term" value="P:defecation"/>
    <property type="evidence" value="ECO:0000315"/>
    <property type="project" value="WormBase"/>
</dbReference>
<dbReference type="GO" id="GO:0010877">
    <property type="term" value="P:lipid transport involved in lipid storage"/>
    <property type="evidence" value="ECO:0000315"/>
    <property type="project" value="UniProtKB"/>
</dbReference>
<dbReference type="GO" id="GO:0040011">
    <property type="term" value="P:locomotion"/>
    <property type="evidence" value="ECO:0000315"/>
    <property type="project" value="WormBase"/>
</dbReference>
<dbReference type="GO" id="GO:0061837">
    <property type="term" value="P:neuropeptide processing"/>
    <property type="evidence" value="ECO:0000315"/>
    <property type="project" value="UniProtKB"/>
</dbReference>
<dbReference type="GO" id="GO:2000294">
    <property type="term" value="P:positive regulation of defecation"/>
    <property type="evidence" value="ECO:0000315"/>
    <property type="project" value="UniProtKB"/>
</dbReference>
<dbReference type="GO" id="GO:2000748">
    <property type="term" value="P:positive regulation of defecation rhythm"/>
    <property type="evidence" value="ECO:0000315"/>
    <property type="project" value="UniProtKB"/>
</dbReference>
<dbReference type="GO" id="GO:1904731">
    <property type="term" value="P:positive regulation of intestinal lipid absorption"/>
    <property type="evidence" value="ECO:0000315"/>
    <property type="project" value="UniProtKB"/>
</dbReference>
<dbReference type="GO" id="GO:0040017">
    <property type="term" value="P:positive regulation of locomotion"/>
    <property type="evidence" value="ECO:0000316"/>
    <property type="project" value="UniProtKB"/>
</dbReference>
<dbReference type="GO" id="GO:0045887">
    <property type="term" value="P:positive regulation of synaptic assembly at neuromuscular junction"/>
    <property type="evidence" value="ECO:0000316"/>
    <property type="project" value="UniProtKB"/>
</dbReference>
<dbReference type="GO" id="GO:1905885">
    <property type="term" value="P:positive regulation of triglyceride transport"/>
    <property type="evidence" value="ECO:0000315"/>
    <property type="project" value="UniProtKB"/>
</dbReference>
<dbReference type="GO" id="GO:0035418">
    <property type="term" value="P:protein localization to synapse"/>
    <property type="evidence" value="ECO:0000315"/>
    <property type="project" value="WormBase"/>
</dbReference>
<dbReference type="GO" id="GO:0016485">
    <property type="term" value="P:protein processing"/>
    <property type="evidence" value="ECO:0000318"/>
    <property type="project" value="GO_Central"/>
</dbReference>
<dbReference type="GO" id="GO:2000292">
    <property type="term" value="P:regulation of defecation"/>
    <property type="evidence" value="ECO:0000316"/>
    <property type="project" value="UniProtKB"/>
</dbReference>
<dbReference type="CDD" id="cd04059">
    <property type="entry name" value="Peptidases_S8_Protein_convertases_Kexins_Furin-like"/>
    <property type="match status" value="1"/>
</dbReference>
<dbReference type="FunFam" id="3.40.50.200:FF:000021">
    <property type="entry name" value="Proprotein convertase subtilisin/kexin type 5a"/>
    <property type="match status" value="1"/>
</dbReference>
<dbReference type="Gene3D" id="2.60.120.260">
    <property type="entry name" value="Galactose-binding domain-like"/>
    <property type="match status" value="1"/>
</dbReference>
<dbReference type="Gene3D" id="3.40.50.200">
    <property type="entry name" value="Peptidase S8/S53 domain"/>
    <property type="match status" value="1"/>
</dbReference>
<dbReference type="InterPro" id="IPR008979">
    <property type="entry name" value="Galactose-bd-like_sf"/>
</dbReference>
<dbReference type="InterPro" id="IPR034182">
    <property type="entry name" value="Kexin/furin"/>
</dbReference>
<dbReference type="InterPro" id="IPR002884">
    <property type="entry name" value="P_dom"/>
</dbReference>
<dbReference type="InterPro" id="IPR000209">
    <property type="entry name" value="Peptidase_S8/S53_dom"/>
</dbReference>
<dbReference type="InterPro" id="IPR036852">
    <property type="entry name" value="Peptidase_S8/S53_dom_sf"/>
</dbReference>
<dbReference type="InterPro" id="IPR023827">
    <property type="entry name" value="Peptidase_S8_Asp-AS"/>
</dbReference>
<dbReference type="InterPro" id="IPR022398">
    <property type="entry name" value="Peptidase_S8_His-AS"/>
</dbReference>
<dbReference type="InterPro" id="IPR015500">
    <property type="entry name" value="Peptidase_S8_subtilisin-rel"/>
</dbReference>
<dbReference type="PANTHER" id="PTHR42884:SF33">
    <property type="entry name" value="ENDOPROTEASE AEX-5"/>
    <property type="match status" value="1"/>
</dbReference>
<dbReference type="PANTHER" id="PTHR42884">
    <property type="entry name" value="PROPROTEIN CONVERTASE SUBTILISIN/KEXIN-RELATED"/>
    <property type="match status" value="1"/>
</dbReference>
<dbReference type="Pfam" id="PF01483">
    <property type="entry name" value="P_proprotein"/>
    <property type="match status" value="1"/>
</dbReference>
<dbReference type="Pfam" id="PF00082">
    <property type="entry name" value="Peptidase_S8"/>
    <property type="match status" value="1"/>
</dbReference>
<dbReference type="PRINTS" id="PR00723">
    <property type="entry name" value="SUBTILISIN"/>
</dbReference>
<dbReference type="SUPFAM" id="SSF49785">
    <property type="entry name" value="Galactose-binding domain-like"/>
    <property type="match status" value="1"/>
</dbReference>
<dbReference type="SUPFAM" id="SSF52743">
    <property type="entry name" value="Subtilisin-like"/>
    <property type="match status" value="1"/>
</dbReference>
<dbReference type="PROSITE" id="PS51829">
    <property type="entry name" value="P_HOMO_B"/>
    <property type="match status" value="1"/>
</dbReference>
<dbReference type="PROSITE" id="PS51892">
    <property type="entry name" value="SUBTILASE"/>
    <property type="match status" value="1"/>
</dbReference>
<dbReference type="PROSITE" id="PS00136">
    <property type="entry name" value="SUBTILASE_ASP"/>
    <property type="match status" value="1"/>
</dbReference>
<dbReference type="PROSITE" id="PS00137">
    <property type="entry name" value="SUBTILASE_HIS"/>
    <property type="match status" value="1"/>
</dbReference>
<feature type="signal peptide" evidence="2">
    <location>
        <begin position="1"/>
        <end position="17"/>
    </location>
</feature>
<feature type="propeptide" id="PRO_0000439454" evidence="2">
    <location>
        <begin position="18"/>
        <end position="99"/>
    </location>
</feature>
<feature type="chain" id="PRO_5004161816" description="Endoprotease aex-5" evidence="2">
    <location>
        <begin position="100"/>
        <end position="537"/>
    </location>
</feature>
<feature type="domain" description="Peptidase S8" evidence="5">
    <location>
        <begin position="111"/>
        <end position="413"/>
    </location>
</feature>
<feature type="domain" description="P/Homo B" evidence="4">
    <location>
        <begin position="407"/>
        <end position="537"/>
    </location>
</feature>
<feature type="active site" description="Charge relay system" evidence="5">
    <location>
        <position position="139"/>
    </location>
</feature>
<feature type="active site" description="Charge relay system" evidence="5">
    <location>
        <position position="178"/>
    </location>
</feature>
<feature type="active site" description="Charge relay system" evidence="5">
    <location>
        <position position="346"/>
    </location>
</feature>
<feature type="glycosylation site" description="N-linked (GlcNAc...) asparagine" evidence="3">
    <location>
        <position position="129"/>
    </location>
</feature>
<feature type="glycosylation site" description="N-linked (GlcNAc...) asparagine" evidence="3">
    <location>
        <position position="380"/>
    </location>
</feature>
<feature type="disulfide bond" evidence="1">
    <location>
        <begin position="286"/>
        <end position="316"/>
    </location>
</feature>
<feature type="mutagenesis site" description="In sv76; intestinal lipid droplets are smaller and their number is reduced. Reduced uptake and accumulation of triglycerides in the intestine." evidence="11">
    <original>G</original>
    <variation>E</variation>
    <location>
        <position position="184"/>
    </location>
</feature>
<feature type="mutagenesis site" description="In sv75; intestinal lipid droplets are smaller and their number is reduced. Reduced uptake and accumulation of triglycerides in the intestine." evidence="11">
    <original>G</original>
    <variation>S</variation>
    <location>
        <position position="405"/>
    </location>
</feature>
<feature type="mutagenesis site" description="In sa23; loss of production of several nlp and flp neuropeptides. Reduced enrichment of unc-13 at presynaptic active sites of neuromuscular junctions. Mutants are constipated due to a defect in body wall muscle and intestinal contractions and have a slightly longer defecation cycle. Reduced uptake and accumulation of triglycerides in the intestine. Mild body thrashing." evidence="7 8 9 10 11">
    <original>C</original>
    <variation>W</variation>
    <location>
        <position position="443"/>
    </location>
</feature>
<evidence type="ECO:0000250" key="1">
    <source>
        <dbReference type="UniProtKB" id="P23188"/>
    </source>
</evidence>
<evidence type="ECO:0000255" key="2"/>
<evidence type="ECO:0000255" key="3">
    <source>
        <dbReference type="PROSITE-ProRule" id="PRU00498"/>
    </source>
</evidence>
<evidence type="ECO:0000255" key="4">
    <source>
        <dbReference type="PROSITE-ProRule" id="PRU01173"/>
    </source>
</evidence>
<evidence type="ECO:0000255" key="5">
    <source>
        <dbReference type="PROSITE-ProRule" id="PRU01240"/>
    </source>
</evidence>
<evidence type="ECO:0000255" key="6">
    <source>
        <dbReference type="PROSITE-ProRule" id="PRU10080"/>
    </source>
</evidence>
<evidence type="ECO:0000269" key="7">
    <source>
    </source>
</evidence>
<evidence type="ECO:0000269" key="8">
    <source>
    </source>
</evidence>
<evidence type="ECO:0000269" key="9">
    <source>
    </source>
</evidence>
<evidence type="ECO:0000269" key="10">
    <source>
    </source>
</evidence>
<evidence type="ECO:0000269" key="11">
    <source>
    </source>
</evidence>
<evidence type="ECO:0000303" key="12">
    <source>
    </source>
</evidence>
<evidence type="ECO:0000303" key="13">
    <source>
    </source>
</evidence>
<evidence type="ECO:0000305" key="14"/>
<evidence type="ECO:0000312" key="15">
    <source>
        <dbReference type="Proteomes" id="UP000001940"/>
    </source>
</evidence>
<evidence type="ECO:0000312" key="16">
    <source>
        <dbReference type="WormBase" id="F32A7.6"/>
    </source>
</evidence>
<accession>P91863</accession>
<proteinExistence type="evidence at protein level"/>
<sequence>MKLIFLLLLFGVSPIVCQDFEDGVFLAKITSIDEHDARKIGRRFGFEAQWKLQSYTDVYVGRRLRRRKRGIEDEIVAEMMLSQQVQFIEKLQGFRRYKRAPMTNKGYPVHVWNLTPSLYIREAWEDGFNASRVTVAVVDDGVDIKHVDLKSAFSPRVSFDFVRFGDLPTPKNSKEFEHGTQCAGLVAMEGQQCGLGVGHGATLGAIKLLGQDFLNDALEGDALAFQKDLIDIYSVSWGPKDDGKSAEKPAKFTEEAIKNGALHGRNGKGNIFVWASGNGGVNGDNCAYDGYVSNEYTLSFGVIDASGAPAAYGEGCSSVLAAVSGGDAMIQTTGLESTCSSISGSSASAAIASGIISLVLDANPTLSQRDIQHLIARTSNASAIRDVELYENSAGLNFHPKVGFGLLNAQKLVVMAATWENVAPQVTCEKMNLANGIIDNSDCDVTKVERVIVSGSIIHPHRGQVQIRLESPRGTISELLPLRPKDTSRDLLDWNFVSVNFFGENSRGIWKLHVTSEEDDVDFRVEMKMFKVVGTMS</sequence>
<name>AEX5_CAEEL</name>
<keyword id="KW-0165">Cleavage on pair of basic residues</keyword>
<keyword id="KW-1015">Disulfide bond</keyword>
<keyword id="KW-0325">Glycoprotein</keyword>
<keyword id="KW-0378">Hydrolase</keyword>
<keyword id="KW-0645">Protease</keyword>
<keyword id="KW-1185">Reference proteome</keyword>
<keyword id="KW-0964">Secreted</keyword>
<keyword id="KW-0720">Serine protease</keyword>
<keyword id="KW-0732">Signal</keyword>
<keyword id="KW-0865">Zymogen</keyword>
<gene>
    <name evidence="13 16" type="primary">aex-5</name>
    <name evidence="16" type="synonym">kpc-3</name>
    <name evidence="16" type="ORF">F32A7.6</name>
</gene>
<comment type="function">
    <text evidence="7 8 9 10 11">Probable serine endoprotease which cleaves preproteins at paired basic amino acids (PubMed:16945111). May process FMRFamide-like (flp) and neuropeptide-like protein (nlp) neuropeptides (PubMed:16945111). In muscles, involved in neuronal retrograde signaling by regulating presynaptic activity and localization of synaptic vesicle fusion protein unc-13 at the neuromuscular junction (NMJ) (PubMed:11804572). Acts in the intestine to regulate anterior body muscle contractions (aBOC) and the expulsion steps during the defecation motor program (DMP) (PubMed:11804572, PubMed:18852466, PubMed:2323555, PubMed:25849533). Probably by regulating DMP, required for fatty acid uptake by intestinal cells and therefore regulates the levels of triglycerides in the intestine (PubMed:25849533). Plays a role in locomotion (PubMed:11804572).</text>
</comment>
<comment type="subcellular location">
    <subcellularLocation>
        <location evidence="9">Secreted</location>
    </subcellularLocation>
</comment>
<comment type="disruption phenotype">
    <text evidence="9 11">RNAi-mediated knockdown causes a reduction in fatty acid uptake (PubMed:25849533). RNAi-mediated knockdown in the intestine causes a severe defect in the expulsion step of the defecation cycle (PubMed:18852466).</text>
</comment>
<comment type="similarity">
    <text evidence="14">Belongs to the peptidase S8 family. Furin subfamily.</text>
</comment>